<gene>
    <name evidence="1" type="primary">rpsB</name>
    <name type="ordered locus">Hore_07650</name>
</gene>
<dbReference type="EMBL" id="CP001098">
    <property type="protein sequence ID" value="ACL69522.1"/>
    <property type="molecule type" value="Genomic_DNA"/>
</dbReference>
<dbReference type="RefSeq" id="WP_012635710.1">
    <property type="nucleotide sequence ID" value="NC_011899.1"/>
</dbReference>
<dbReference type="SMR" id="B8CW53"/>
<dbReference type="STRING" id="373903.Hore_07650"/>
<dbReference type="KEGG" id="hor:Hore_07650"/>
<dbReference type="eggNOG" id="COG0052">
    <property type="taxonomic scope" value="Bacteria"/>
</dbReference>
<dbReference type="HOGENOM" id="CLU_040318_1_2_9"/>
<dbReference type="OrthoDB" id="9808036at2"/>
<dbReference type="Proteomes" id="UP000000719">
    <property type="component" value="Chromosome"/>
</dbReference>
<dbReference type="GO" id="GO:0022627">
    <property type="term" value="C:cytosolic small ribosomal subunit"/>
    <property type="evidence" value="ECO:0007669"/>
    <property type="project" value="TreeGrafter"/>
</dbReference>
<dbReference type="GO" id="GO:0003735">
    <property type="term" value="F:structural constituent of ribosome"/>
    <property type="evidence" value="ECO:0007669"/>
    <property type="project" value="InterPro"/>
</dbReference>
<dbReference type="GO" id="GO:0006412">
    <property type="term" value="P:translation"/>
    <property type="evidence" value="ECO:0007669"/>
    <property type="project" value="UniProtKB-UniRule"/>
</dbReference>
<dbReference type="CDD" id="cd01425">
    <property type="entry name" value="RPS2"/>
    <property type="match status" value="1"/>
</dbReference>
<dbReference type="FunFam" id="1.10.287.610:FF:000001">
    <property type="entry name" value="30S ribosomal protein S2"/>
    <property type="match status" value="1"/>
</dbReference>
<dbReference type="Gene3D" id="3.40.50.10490">
    <property type="entry name" value="Glucose-6-phosphate isomerase like protein, domain 1"/>
    <property type="match status" value="1"/>
</dbReference>
<dbReference type="Gene3D" id="1.10.287.610">
    <property type="entry name" value="Helix hairpin bin"/>
    <property type="match status" value="1"/>
</dbReference>
<dbReference type="HAMAP" id="MF_00291_B">
    <property type="entry name" value="Ribosomal_uS2_B"/>
    <property type="match status" value="1"/>
</dbReference>
<dbReference type="InterPro" id="IPR001865">
    <property type="entry name" value="Ribosomal_uS2"/>
</dbReference>
<dbReference type="InterPro" id="IPR005706">
    <property type="entry name" value="Ribosomal_uS2_bac/mit/plastid"/>
</dbReference>
<dbReference type="InterPro" id="IPR018130">
    <property type="entry name" value="Ribosomal_uS2_CS"/>
</dbReference>
<dbReference type="InterPro" id="IPR023591">
    <property type="entry name" value="Ribosomal_uS2_flav_dom_sf"/>
</dbReference>
<dbReference type="NCBIfam" id="TIGR01011">
    <property type="entry name" value="rpsB_bact"/>
    <property type="match status" value="1"/>
</dbReference>
<dbReference type="PANTHER" id="PTHR12534">
    <property type="entry name" value="30S RIBOSOMAL PROTEIN S2 PROKARYOTIC AND ORGANELLAR"/>
    <property type="match status" value="1"/>
</dbReference>
<dbReference type="PANTHER" id="PTHR12534:SF0">
    <property type="entry name" value="SMALL RIBOSOMAL SUBUNIT PROTEIN US2M"/>
    <property type="match status" value="1"/>
</dbReference>
<dbReference type="Pfam" id="PF00318">
    <property type="entry name" value="Ribosomal_S2"/>
    <property type="match status" value="1"/>
</dbReference>
<dbReference type="PRINTS" id="PR00395">
    <property type="entry name" value="RIBOSOMALS2"/>
</dbReference>
<dbReference type="SUPFAM" id="SSF52313">
    <property type="entry name" value="Ribosomal protein S2"/>
    <property type="match status" value="1"/>
</dbReference>
<dbReference type="PROSITE" id="PS00962">
    <property type="entry name" value="RIBOSOMAL_S2_1"/>
    <property type="match status" value="1"/>
</dbReference>
<organism>
    <name type="scientific">Halothermothrix orenii (strain H 168 / OCM 544 / DSM 9562)</name>
    <dbReference type="NCBI Taxonomy" id="373903"/>
    <lineage>
        <taxon>Bacteria</taxon>
        <taxon>Bacillati</taxon>
        <taxon>Bacillota</taxon>
        <taxon>Clostridia</taxon>
        <taxon>Halanaerobiales</taxon>
        <taxon>Halothermotrichaceae</taxon>
        <taxon>Halothermothrix</taxon>
    </lineage>
</organism>
<sequence>MAVVTMKQLLESGVHFGHQTRRWNPKMKDYIFTERNGIYIIDLQKTVALLDKAYDYVRDMASKGKTILFVGTKKQAQETIKTEAERCGMPYVNQRWLGGMLTNFRTIKKRVKRLNELEKMEEDGLFEVLPKKEVILLKKERDKLERFLGGIRDMKNLPDVVYITDPRKESIAVAEARKLNIPIVSIVDTNCDPDLIDYIIPGNDDAIRAVKLISSKIADAVLAGKQGEQLTEEAKPEDKEDEKGQAEEKEVKEENNSANKEE</sequence>
<protein>
    <recommendedName>
        <fullName evidence="1">Small ribosomal subunit protein uS2</fullName>
    </recommendedName>
    <alternativeName>
        <fullName evidence="3">30S ribosomal protein S2</fullName>
    </alternativeName>
</protein>
<reference key="1">
    <citation type="journal article" date="2009" name="PLoS ONE">
        <title>Genome analysis of the anaerobic thermohalophilic bacterium Halothermothrix orenii.</title>
        <authorList>
            <person name="Mavromatis K."/>
            <person name="Ivanova N."/>
            <person name="Anderson I."/>
            <person name="Lykidis A."/>
            <person name="Hooper S.D."/>
            <person name="Sun H."/>
            <person name="Kunin V."/>
            <person name="Lapidus A."/>
            <person name="Hugenholtz P."/>
            <person name="Patel B."/>
            <person name="Kyrpides N.C."/>
        </authorList>
    </citation>
    <scope>NUCLEOTIDE SEQUENCE [LARGE SCALE GENOMIC DNA]</scope>
    <source>
        <strain>H 168 / OCM 544 / DSM 9562</strain>
    </source>
</reference>
<comment type="similarity">
    <text evidence="1">Belongs to the universal ribosomal protein uS2 family.</text>
</comment>
<name>RS2_HALOH</name>
<accession>B8CW53</accession>
<keyword id="KW-1185">Reference proteome</keyword>
<keyword id="KW-0687">Ribonucleoprotein</keyword>
<keyword id="KW-0689">Ribosomal protein</keyword>
<proteinExistence type="inferred from homology"/>
<evidence type="ECO:0000255" key="1">
    <source>
        <dbReference type="HAMAP-Rule" id="MF_00291"/>
    </source>
</evidence>
<evidence type="ECO:0000256" key="2">
    <source>
        <dbReference type="SAM" id="MobiDB-lite"/>
    </source>
</evidence>
<evidence type="ECO:0000305" key="3"/>
<feature type="chain" id="PRO_1000194335" description="Small ribosomal subunit protein uS2">
    <location>
        <begin position="1"/>
        <end position="262"/>
    </location>
</feature>
<feature type="region of interest" description="Disordered" evidence="2">
    <location>
        <begin position="225"/>
        <end position="262"/>
    </location>
</feature>
<feature type="compositionally biased region" description="Basic and acidic residues" evidence="2">
    <location>
        <begin position="232"/>
        <end position="262"/>
    </location>
</feature>